<organism>
    <name type="scientific">Rattus norvegicus</name>
    <name type="common">Rat</name>
    <dbReference type="NCBI Taxonomy" id="10116"/>
    <lineage>
        <taxon>Eukaryota</taxon>
        <taxon>Metazoa</taxon>
        <taxon>Chordata</taxon>
        <taxon>Craniata</taxon>
        <taxon>Vertebrata</taxon>
        <taxon>Euteleostomi</taxon>
        <taxon>Mammalia</taxon>
        <taxon>Eutheria</taxon>
        <taxon>Euarchontoglires</taxon>
        <taxon>Glires</taxon>
        <taxon>Rodentia</taxon>
        <taxon>Myomorpha</taxon>
        <taxon>Muroidea</taxon>
        <taxon>Muridae</taxon>
        <taxon>Murinae</taxon>
        <taxon>Rattus</taxon>
    </lineage>
</organism>
<evidence type="ECO:0000250" key="1"/>
<evidence type="ECO:0000255" key="2">
    <source>
        <dbReference type="PROSITE-ProRule" id="PRU00160"/>
    </source>
</evidence>
<evidence type="ECO:0000269" key="3">
    <source>
    </source>
</evidence>
<evidence type="ECO:0000305" key="4"/>
<accession>Q6P9X4</accession>
<accession>O88765</accession>
<dbReference type="EC" id="3.1.3.48"/>
<dbReference type="EMBL" id="AJ007016">
    <property type="protein sequence ID" value="CAA07417.1"/>
    <property type="molecule type" value="mRNA"/>
</dbReference>
<dbReference type="EMBL" id="BC060549">
    <property type="protein sequence ID" value="AAH60549.1"/>
    <property type="molecule type" value="mRNA"/>
</dbReference>
<dbReference type="RefSeq" id="NP_445927.2">
    <property type="nucleotide sequence ID" value="NM_053475.2"/>
</dbReference>
<dbReference type="RefSeq" id="XP_017449153.1">
    <property type="nucleotide sequence ID" value="XM_017593664.3"/>
</dbReference>
<dbReference type="RefSeq" id="XP_017449154.1">
    <property type="nucleotide sequence ID" value="XM_017593665.3"/>
</dbReference>
<dbReference type="RefSeq" id="XP_038966808.1">
    <property type="nucleotide sequence ID" value="XM_039110880.2"/>
</dbReference>
<dbReference type="RefSeq" id="XP_038966809.1">
    <property type="nucleotide sequence ID" value="XM_039110881.2"/>
</dbReference>
<dbReference type="RefSeq" id="XP_063144583.1">
    <property type="nucleotide sequence ID" value="XM_063288513.1"/>
</dbReference>
<dbReference type="BMRB" id="Q6P9X4"/>
<dbReference type="SMR" id="Q6P9X4"/>
<dbReference type="FunCoup" id="Q6P9X4">
    <property type="interactions" value="1619"/>
</dbReference>
<dbReference type="IntAct" id="Q6P9X4">
    <property type="interactions" value="1"/>
</dbReference>
<dbReference type="STRING" id="10116.ENSRNOP00000064832"/>
<dbReference type="iPTMnet" id="Q6P9X4"/>
<dbReference type="PhosphoSitePlus" id="Q6P9X4"/>
<dbReference type="jPOST" id="Q6P9X4"/>
<dbReference type="PaxDb" id="10116-ENSRNOP00000064832"/>
<dbReference type="Ensembl" id="ENSRNOT00000074415.3">
    <property type="protein sequence ID" value="ENSRNOP00000064832.1"/>
    <property type="gene ID" value="ENSRNOG00000050044.3"/>
</dbReference>
<dbReference type="GeneID" id="85237"/>
<dbReference type="KEGG" id="rno:85237"/>
<dbReference type="AGR" id="RGD:619786"/>
<dbReference type="CTD" id="8073"/>
<dbReference type="RGD" id="619786">
    <property type="gene designation" value="Ptp4a2"/>
</dbReference>
<dbReference type="eggNOG" id="KOG2836">
    <property type="taxonomic scope" value="Eukaryota"/>
</dbReference>
<dbReference type="GeneTree" id="ENSGT00940000154383"/>
<dbReference type="HOGENOM" id="CLU_099263_2_0_1"/>
<dbReference type="InParanoid" id="Q6P9X4"/>
<dbReference type="OMA" id="RCCQQTY"/>
<dbReference type="OrthoDB" id="1177at9989"/>
<dbReference type="PhylomeDB" id="Q6P9X4"/>
<dbReference type="Reactome" id="R-RNO-8873719">
    <property type="pathway name" value="RAB geranylgeranylation"/>
</dbReference>
<dbReference type="PRO" id="PR:Q6P9X4"/>
<dbReference type="Proteomes" id="UP000002494">
    <property type="component" value="Chromosome 5"/>
</dbReference>
<dbReference type="Bgee" id="ENSRNOG00000050044">
    <property type="expression patterns" value="Expressed in quadriceps femoris and 19 other cell types or tissues"/>
</dbReference>
<dbReference type="GO" id="GO:0005737">
    <property type="term" value="C:cytoplasm"/>
    <property type="evidence" value="ECO:0000266"/>
    <property type="project" value="RGD"/>
</dbReference>
<dbReference type="GO" id="GO:0005829">
    <property type="term" value="C:cytosol"/>
    <property type="evidence" value="ECO:0000266"/>
    <property type="project" value="RGD"/>
</dbReference>
<dbReference type="GO" id="GO:0005769">
    <property type="term" value="C:early endosome"/>
    <property type="evidence" value="ECO:0007669"/>
    <property type="project" value="UniProtKB-SubCell"/>
</dbReference>
<dbReference type="GO" id="GO:0005634">
    <property type="term" value="C:nucleus"/>
    <property type="evidence" value="ECO:0000318"/>
    <property type="project" value="GO_Central"/>
</dbReference>
<dbReference type="GO" id="GO:0005886">
    <property type="term" value="C:plasma membrane"/>
    <property type="evidence" value="ECO:0007669"/>
    <property type="project" value="UniProtKB-SubCell"/>
</dbReference>
<dbReference type="GO" id="GO:0004857">
    <property type="term" value="F:enzyme inhibitor activity"/>
    <property type="evidence" value="ECO:0000266"/>
    <property type="project" value="RGD"/>
</dbReference>
<dbReference type="GO" id="GO:0004725">
    <property type="term" value="F:protein tyrosine phosphatase activity"/>
    <property type="evidence" value="ECO:0000318"/>
    <property type="project" value="GO_Central"/>
</dbReference>
<dbReference type="CDD" id="cd18536">
    <property type="entry name" value="PTP-IVa2"/>
    <property type="match status" value="1"/>
</dbReference>
<dbReference type="FunFam" id="3.90.190.10:FF:000012">
    <property type="entry name" value="protein tyrosine phosphatase type IVA 1"/>
    <property type="match status" value="1"/>
</dbReference>
<dbReference type="Gene3D" id="3.90.190.10">
    <property type="entry name" value="Protein tyrosine phosphatase superfamily"/>
    <property type="match status" value="1"/>
</dbReference>
<dbReference type="InterPro" id="IPR029021">
    <property type="entry name" value="Prot-tyrosine_phosphatase-like"/>
</dbReference>
<dbReference type="InterPro" id="IPR050561">
    <property type="entry name" value="PTP"/>
</dbReference>
<dbReference type="InterPro" id="IPR000242">
    <property type="entry name" value="PTP_cat"/>
</dbReference>
<dbReference type="InterPro" id="IPR003595">
    <property type="entry name" value="Tyr_Pase_cat"/>
</dbReference>
<dbReference type="InterPro" id="IPR000387">
    <property type="entry name" value="Tyr_Pase_dom"/>
</dbReference>
<dbReference type="InterPro" id="IPR020422">
    <property type="entry name" value="TYR_PHOSPHATASE_DUAL_dom"/>
</dbReference>
<dbReference type="PANTHER" id="PTHR23339">
    <property type="entry name" value="TYROSINE SPECIFIC PROTEIN PHOSPHATASE AND DUAL SPECIFICITY PROTEIN PHOSPHATASE"/>
    <property type="match status" value="1"/>
</dbReference>
<dbReference type="Pfam" id="PF00102">
    <property type="entry name" value="Y_phosphatase"/>
    <property type="match status" value="1"/>
</dbReference>
<dbReference type="SMART" id="SM00404">
    <property type="entry name" value="PTPc_motif"/>
    <property type="match status" value="1"/>
</dbReference>
<dbReference type="SUPFAM" id="SSF52799">
    <property type="entry name" value="(Phosphotyrosine protein) phosphatases II"/>
    <property type="match status" value="1"/>
</dbReference>
<dbReference type="PROSITE" id="PS50056">
    <property type="entry name" value="TYR_PHOSPHATASE_2"/>
    <property type="match status" value="1"/>
</dbReference>
<dbReference type="PROSITE" id="PS50054">
    <property type="entry name" value="TYR_PHOSPHATASE_DUAL"/>
    <property type="match status" value="1"/>
</dbReference>
<protein>
    <recommendedName>
        <fullName>Protein tyrosine phosphatase type IVA 2</fullName>
        <ecNumber>3.1.3.48</ecNumber>
    </recommendedName>
    <alternativeName>
        <fullName>Protein-tyrosine phosphatase 4a2</fullName>
    </alternativeName>
    <alternativeName>
        <fullName>Protein-tyrosine phosphatase of regenerating liver 2</fullName>
        <shortName>PRL-2</shortName>
    </alternativeName>
</protein>
<keyword id="KW-1003">Cell membrane</keyword>
<keyword id="KW-0963">Cytoplasm</keyword>
<keyword id="KW-1015">Disulfide bond</keyword>
<keyword id="KW-0967">Endosome</keyword>
<keyword id="KW-0378">Hydrolase</keyword>
<keyword id="KW-0449">Lipoprotein</keyword>
<keyword id="KW-0472">Membrane</keyword>
<keyword id="KW-0488">Methylation</keyword>
<keyword id="KW-0636">Prenylation</keyword>
<keyword id="KW-0904">Protein phosphatase</keyword>
<keyword id="KW-1185">Reference proteome</keyword>
<name>TP4A2_RAT</name>
<comment type="function">
    <text evidence="1">Protein tyrosine phosphatase which stimulates progression from G1 into S phase during mitosis. Inhibits geranylgeranyl transferase type II activity by blocking the association between RABGGTA and RABGGTB (By similarity).</text>
</comment>
<comment type="catalytic activity">
    <reaction>
        <text>O-phospho-L-tyrosyl-[protein] + H2O = L-tyrosyl-[protein] + phosphate</text>
        <dbReference type="Rhea" id="RHEA:10684"/>
        <dbReference type="Rhea" id="RHEA-COMP:10136"/>
        <dbReference type="Rhea" id="RHEA-COMP:20101"/>
        <dbReference type="ChEBI" id="CHEBI:15377"/>
        <dbReference type="ChEBI" id="CHEBI:43474"/>
        <dbReference type="ChEBI" id="CHEBI:46858"/>
        <dbReference type="ChEBI" id="CHEBI:61978"/>
        <dbReference type="EC" id="3.1.3.48"/>
    </reaction>
</comment>
<comment type="activity regulation">
    <text evidence="1">Inhibited by sodium orthovanadate and pentamidine.</text>
</comment>
<comment type="subunit">
    <text evidence="1">In contrast to PTP4A1 and PTP4A3, does not interact with tubulin. Interacts with RABGGTB (By similarity).</text>
</comment>
<comment type="subcellular location">
    <subcellularLocation>
        <location evidence="1">Cell membrane</location>
    </subcellularLocation>
    <subcellularLocation>
        <location evidence="1">Early endosome</location>
    </subcellularLocation>
    <subcellularLocation>
        <location evidence="1">Cytoplasm</location>
    </subcellularLocation>
</comment>
<comment type="tissue specificity">
    <text evidence="3">Anterior pituitary, liver, brain, adrenal gland, kidney, testis and heart. Expression in the anterior pituitary is 3 fold higher in male as compared to female.</text>
</comment>
<comment type="PTM">
    <text evidence="1">Farnesylated. Farnesylation is required for membrane targeting and for interaction with RABGGTB (By similarity).</text>
</comment>
<comment type="similarity">
    <text evidence="4">Belongs to the protein-tyrosine phosphatase family.</text>
</comment>
<reference key="1">
    <citation type="journal article" date="1998" name="Biochim. Biophys. Acta">
        <title>Expression of a novel rat protein tyrosine phosphatase gene.</title>
        <authorList>
            <person name="Carter D.A."/>
        </authorList>
    </citation>
    <scope>NUCLEOTIDE SEQUENCE [MRNA]</scope>
    <scope>TISSUE SPECIFICITY</scope>
    <source>
        <strain>Sprague-Dawley</strain>
        <tissue>Pituitary anterior lobe</tissue>
    </source>
</reference>
<reference key="2">
    <citation type="journal article" date="2004" name="Genome Res.">
        <title>The status, quality, and expansion of the NIH full-length cDNA project: the Mammalian Gene Collection (MGC).</title>
        <authorList>
            <consortium name="The MGC Project Team"/>
        </authorList>
    </citation>
    <scope>NUCLEOTIDE SEQUENCE [LARGE SCALE MRNA]</scope>
    <source>
        <tissue>Pituitary</tissue>
    </source>
</reference>
<sequence length="167" mass="19127">MNRPAPVEISYENMRFLITHNPTNATLNKFTEELKKYGVTTLVRVCDATYDKAPVEKEGIHVLDWPFDDGAPPPNQIVDDWLNLLKTKFREEPGCCVAVHCVAGLGRAPVLVALALIECGMKYEDAVQFIRQKRRGAFNSKQLLYLEKYRPKMRLRFRDTNGHCCVQ</sequence>
<feature type="chain" id="PRO_0000094787" description="Protein tyrosine phosphatase type IVA 2">
    <location>
        <begin position="1"/>
        <end position="164"/>
    </location>
</feature>
<feature type="propeptide" id="PRO_0000396733" description="Removed in mature form" evidence="1">
    <location>
        <begin position="165"/>
        <end position="167"/>
    </location>
</feature>
<feature type="domain" description="Tyrosine-protein phosphatase" evidence="2">
    <location>
        <begin position="5"/>
        <end position="158"/>
    </location>
</feature>
<feature type="active site" description="Proton donor" evidence="1">
    <location>
        <position position="69"/>
    </location>
</feature>
<feature type="active site" description="Phosphocysteine intermediate" evidence="2">
    <location>
        <position position="101"/>
    </location>
</feature>
<feature type="binding site" evidence="1">
    <location>
        <begin position="102"/>
        <end position="107"/>
    </location>
    <ligand>
        <name>phosphate</name>
        <dbReference type="ChEBI" id="CHEBI:43474"/>
    </ligand>
</feature>
<feature type="binding site" evidence="1">
    <location>
        <position position="107"/>
    </location>
    <ligand>
        <name>substrate</name>
    </ligand>
</feature>
<feature type="modified residue" description="Cysteine methyl ester" evidence="1">
    <location>
        <position position="164"/>
    </location>
</feature>
<feature type="lipid moiety-binding region" description="S-farnesyl cysteine" evidence="1">
    <location>
        <position position="164"/>
    </location>
</feature>
<feature type="disulfide bond" evidence="1">
    <location>
        <begin position="46"/>
        <end position="101"/>
    </location>
</feature>
<feature type="sequence conflict" description="In Ref. 1; CAA07417." evidence="4" ref="1">
    <original>T</original>
    <variation>A</variation>
    <location>
        <position position="23"/>
    </location>
</feature>
<feature type="sequence conflict" description="In Ref. 1; CAA07417." evidence="4" ref="1">
    <original>F</original>
    <variation>S</variation>
    <location>
        <position position="157"/>
    </location>
</feature>
<proteinExistence type="evidence at transcript level"/>
<gene>
    <name type="primary">Ptp4a2</name>
    <name type="synonym">Prl2</name>
</gene>